<accession>A4TRQ7</accession>
<keyword id="KW-0963">Cytoplasm</keyword>
<keyword id="KW-0251">Elongation factor</keyword>
<keyword id="KW-0379">Hydroxylation</keyword>
<keyword id="KW-0648">Protein biosynthesis</keyword>
<name>EFP_YERPP</name>
<evidence type="ECO:0000255" key="1">
    <source>
        <dbReference type="HAMAP-Rule" id="MF_00141"/>
    </source>
</evidence>
<proteinExistence type="inferred from homology"/>
<reference key="1">
    <citation type="submission" date="2007-02" db="EMBL/GenBank/DDBJ databases">
        <title>Complete sequence of chromosome of Yersinia pestis Pestoides F.</title>
        <authorList>
            <consortium name="US DOE Joint Genome Institute"/>
            <person name="Copeland A."/>
            <person name="Lucas S."/>
            <person name="Lapidus A."/>
            <person name="Barry K."/>
            <person name="Detter J.C."/>
            <person name="Glavina del Rio T."/>
            <person name="Hammon N."/>
            <person name="Israni S."/>
            <person name="Dalin E."/>
            <person name="Tice H."/>
            <person name="Pitluck S."/>
            <person name="Di Bartolo G."/>
            <person name="Chain P."/>
            <person name="Malfatti S."/>
            <person name="Shin M."/>
            <person name="Vergez L."/>
            <person name="Schmutz J."/>
            <person name="Larimer F."/>
            <person name="Land M."/>
            <person name="Hauser L."/>
            <person name="Worsham P."/>
            <person name="Chu M."/>
            <person name="Bearden S."/>
            <person name="Garcia E."/>
            <person name="Richardson P."/>
        </authorList>
    </citation>
    <scope>NUCLEOTIDE SEQUENCE [LARGE SCALE GENOMIC DNA]</scope>
    <source>
        <strain>Pestoides F</strain>
    </source>
</reference>
<feature type="chain" id="PRO_1000010905" description="Elongation factor P">
    <location>
        <begin position="1"/>
        <end position="188"/>
    </location>
</feature>
<feature type="modified residue" description="N6-(3,6-diaminohexanoyl)-5-hydroxylysine" evidence="1">
    <location>
        <position position="34"/>
    </location>
</feature>
<sequence>MASYYSNDFRPGLKIMFEGEPYAVESSEFVKPGKGQAFARVKMRRLLTGGRVEKTFKSTDSLEGADVNDMNLTYLYNDGEFWHFMNNETYEQLQADAKAVGDNGKWLIDQAECIVTLWNGQPIAVTPPNFVELEIVDTDPGLKGDTAGTGGKPATLSTGAVVKVPLFVQVGEIIKVDTRSGEYVSRVK</sequence>
<protein>
    <recommendedName>
        <fullName evidence="1">Elongation factor P</fullName>
        <shortName evidence="1">EF-P</shortName>
    </recommendedName>
</protein>
<dbReference type="EMBL" id="CP000668">
    <property type="protein sequence ID" value="ABP41969.1"/>
    <property type="molecule type" value="Genomic_DNA"/>
</dbReference>
<dbReference type="RefSeq" id="WP_002209131.1">
    <property type="nucleotide sequence ID" value="NZ_CP009715.1"/>
</dbReference>
<dbReference type="SMR" id="A4TRQ7"/>
<dbReference type="GeneID" id="57974254"/>
<dbReference type="KEGG" id="ypp:YPDSF_3619"/>
<dbReference type="PATRIC" id="fig|386656.14.peg.279"/>
<dbReference type="UniPathway" id="UPA00345"/>
<dbReference type="GO" id="GO:0005737">
    <property type="term" value="C:cytoplasm"/>
    <property type="evidence" value="ECO:0007669"/>
    <property type="project" value="UniProtKB-SubCell"/>
</dbReference>
<dbReference type="GO" id="GO:0003746">
    <property type="term" value="F:translation elongation factor activity"/>
    <property type="evidence" value="ECO:0007669"/>
    <property type="project" value="UniProtKB-UniRule"/>
</dbReference>
<dbReference type="GO" id="GO:0043043">
    <property type="term" value="P:peptide biosynthetic process"/>
    <property type="evidence" value="ECO:0007669"/>
    <property type="project" value="InterPro"/>
</dbReference>
<dbReference type="CDD" id="cd04470">
    <property type="entry name" value="S1_EF-P_repeat_1"/>
    <property type="match status" value="1"/>
</dbReference>
<dbReference type="CDD" id="cd05794">
    <property type="entry name" value="S1_EF-P_repeat_2"/>
    <property type="match status" value="1"/>
</dbReference>
<dbReference type="FunFam" id="2.30.30.30:FF:000003">
    <property type="entry name" value="Elongation factor P"/>
    <property type="match status" value="1"/>
</dbReference>
<dbReference type="FunFam" id="2.40.50.140:FF:000004">
    <property type="entry name" value="Elongation factor P"/>
    <property type="match status" value="1"/>
</dbReference>
<dbReference type="FunFam" id="2.40.50.140:FF:000009">
    <property type="entry name" value="Elongation factor P"/>
    <property type="match status" value="1"/>
</dbReference>
<dbReference type="Gene3D" id="2.30.30.30">
    <property type="match status" value="1"/>
</dbReference>
<dbReference type="Gene3D" id="2.40.50.140">
    <property type="entry name" value="Nucleic acid-binding proteins"/>
    <property type="match status" value="2"/>
</dbReference>
<dbReference type="HAMAP" id="MF_00141">
    <property type="entry name" value="EF_P"/>
    <property type="match status" value="1"/>
</dbReference>
<dbReference type="InterPro" id="IPR015365">
    <property type="entry name" value="Elong-fact-P_C"/>
</dbReference>
<dbReference type="InterPro" id="IPR012340">
    <property type="entry name" value="NA-bd_OB-fold"/>
</dbReference>
<dbReference type="InterPro" id="IPR014722">
    <property type="entry name" value="Rib_uL2_dom2"/>
</dbReference>
<dbReference type="InterPro" id="IPR020599">
    <property type="entry name" value="Transl_elong_fac_P/YeiP"/>
</dbReference>
<dbReference type="InterPro" id="IPR013185">
    <property type="entry name" value="Transl_elong_KOW-like"/>
</dbReference>
<dbReference type="InterPro" id="IPR001059">
    <property type="entry name" value="Transl_elong_P/YeiP_cen"/>
</dbReference>
<dbReference type="InterPro" id="IPR013852">
    <property type="entry name" value="Transl_elong_P/YeiP_CS"/>
</dbReference>
<dbReference type="InterPro" id="IPR011768">
    <property type="entry name" value="Transl_elongation_fac_P"/>
</dbReference>
<dbReference type="InterPro" id="IPR008991">
    <property type="entry name" value="Translation_prot_SH3-like_sf"/>
</dbReference>
<dbReference type="NCBIfam" id="TIGR00038">
    <property type="entry name" value="efp"/>
    <property type="match status" value="1"/>
</dbReference>
<dbReference type="NCBIfam" id="NF001810">
    <property type="entry name" value="PRK00529.1"/>
    <property type="match status" value="1"/>
</dbReference>
<dbReference type="PANTHER" id="PTHR30053">
    <property type="entry name" value="ELONGATION FACTOR P"/>
    <property type="match status" value="1"/>
</dbReference>
<dbReference type="PANTHER" id="PTHR30053:SF12">
    <property type="entry name" value="ELONGATION FACTOR P (EF-P) FAMILY PROTEIN"/>
    <property type="match status" value="1"/>
</dbReference>
<dbReference type="Pfam" id="PF01132">
    <property type="entry name" value="EFP"/>
    <property type="match status" value="1"/>
</dbReference>
<dbReference type="Pfam" id="PF08207">
    <property type="entry name" value="EFP_N"/>
    <property type="match status" value="1"/>
</dbReference>
<dbReference type="Pfam" id="PF09285">
    <property type="entry name" value="Elong-fact-P_C"/>
    <property type="match status" value="1"/>
</dbReference>
<dbReference type="PIRSF" id="PIRSF005901">
    <property type="entry name" value="EF-P"/>
    <property type="match status" value="1"/>
</dbReference>
<dbReference type="SMART" id="SM01185">
    <property type="entry name" value="EFP"/>
    <property type="match status" value="1"/>
</dbReference>
<dbReference type="SMART" id="SM00841">
    <property type="entry name" value="Elong-fact-P_C"/>
    <property type="match status" value="1"/>
</dbReference>
<dbReference type="SUPFAM" id="SSF50249">
    <property type="entry name" value="Nucleic acid-binding proteins"/>
    <property type="match status" value="2"/>
</dbReference>
<dbReference type="SUPFAM" id="SSF50104">
    <property type="entry name" value="Translation proteins SH3-like domain"/>
    <property type="match status" value="1"/>
</dbReference>
<dbReference type="PROSITE" id="PS01275">
    <property type="entry name" value="EFP"/>
    <property type="match status" value="1"/>
</dbReference>
<organism>
    <name type="scientific">Yersinia pestis (strain Pestoides F)</name>
    <dbReference type="NCBI Taxonomy" id="386656"/>
    <lineage>
        <taxon>Bacteria</taxon>
        <taxon>Pseudomonadati</taxon>
        <taxon>Pseudomonadota</taxon>
        <taxon>Gammaproteobacteria</taxon>
        <taxon>Enterobacterales</taxon>
        <taxon>Yersiniaceae</taxon>
        <taxon>Yersinia</taxon>
    </lineage>
</organism>
<comment type="function">
    <text evidence="1">Involved in peptide bond synthesis. Alleviates ribosome stalling that occurs when 3 or more consecutive Pro residues or the sequence PPG is present in a protein, possibly by augmenting the peptidyl transferase activity of the ribosome. Modification of Lys-34 is required for alleviation.</text>
</comment>
<comment type="pathway">
    <text evidence="1">Protein biosynthesis; polypeptide chain elongation.</text>
</comment>
<comment type="subcellular location">
    <subcellularLocation>
        <location evidence="1">Cytoplasm</location>
    </subcellularLocation>
</comment>
<comment type="PTM">
    <text evidence="1">May be beta-lysylated on the epsilon-amino group of Lys-34 by the combined action of EpmA and EpmB, and then hydroxylated on the C5 position of the same residue by EpmC (if this protein is present). Lysylation is critical for the stimulatory effect of EF-P on peptide-bond formation. The lysylation moiety may extend toward the peptidyltransferase center and stabilize the terminal 3-CCA end of the tRNA. Hydroxylation of the C5 position on Lys-34 may allow additional potential stabilizing hydrogen-bond interactions with the P-tRNA.</text>
</comment>
<comment type="similarity">
    <text evidence="1">Belongs to the elongation factor P family.</text>
</comment>
<gene>
    <name evidence="1" type="primary">efp</name>
    <name type="ordered locus">YPDSF_3619</name>
</gene>